<accession>Q9NQ34</accession>
<accession>Q7Z649</accession>
<feature type="signal peptide" evidence="4">
    <location>
        <begin position="1"/>
        <end position="33"/>
    </location>
</feature>
<feature type="chain" id="PRO_0000034376" description="Transmembrane protein 9B">
    <location>
        <begin position="34"/>
        <end position="198"/>
    </location>
</feature>
<feature type="transmembrane region" description="Helical" evidence="2">
    <location>
        <begin position="105"/>
        <end position="125"/>
    </location>
</feature>
<feature type="modified residue" description="Phosphoserine" evidence="1">
    <location>
        <position position="142"/>
    </location>
</feature>
<feature type="modified residue" description="Phosphoserine" evidence="9">
    <location>
        <position position="189"/>
    </location>
</feature>
<feature type="glycosylation site" description="N-linked (GlcNAc...) asparagine" evidence="3">
    <location>
        <position position="60"/>
    </location>
</feature>
<feature type="splice variant" id="VSP_055294" description="In isoform 2." evidence="6 7">
    <location>
        <begin position="1"/>
        <end position="74"/>
    </location>
</feature>
<comment type="function">
    <text evidence="5">Enhances production of pro-inflammatory cytokines induced by TNF, IL1B, and TLR ligands. Has a role in TNF activation of both the NF-kappaB and MAPK pathways.</text>
</comment>
<comment type="interaction">
    <interactant intactId="EBI-724458">
        <id>Q9NQ34</id>
    </interactant>
    <interactant intactId="EBI-744771">
        <id>O75344</id>
        <label>FKBP6</label>
    </interactant>
    <organismsDiffer>false</organismsDiffer>
    <experiments>3</experiments>
</comment>
<comment type="subcellular location">
    <subcellularLocation>
        <location evidence="5">Lysosome membrane</location>
        <topology evidence="2">Single-pass membrane protein</topology>
    </subcellularLocation>
    <subcellularLocation>
        <location evidence="5">Early endosome membrane</location>
        <topology evidence="2">Single-pass membrane protein</topology>
    </subcellularLocation>
</comment>
<comment type="alternative products">
    <event type="alternative splicing"/>
    <isoform>
        <id>Q9NQ34-1</id>
        <name>1</name>
        <sequence type="displayed"/>
    </isoform>
    <isoform>
        <id>Q9NQ34-2</id>
        <name>2</name>
        <sequence type="described" ref="VSP_055294"/>
    </isoform>
</comment>
<comment type="PTM">
    <text evidence="5">N-glycosylated.</text>
</comment>
<comment type="similarity">
    <text evidence="8">Belongs to the TMEM9 family.</text>
</comment>
<gene>
    <name type="primary">TMEM9B</name>
    <name type="synonym">C11orf15</name>
    <name type="ORF">UNQ712/PRO1375</name>
</gene>
<organism>
    <name type="scientific">Homo sapiens</name>
    <name type="common">Human</name>
    <dbReference type="NCBI Taxonomy" id="9606"/>
    <lineage>
        <taxon>Eukaryota</taxon>
        <taxon>Metazoa</taxon>
        <taxon>Chordata</taxon>
        <taxon>Craniata</taxon>
        <taxon>Vertebrata</taxon>
        <taxon>Euteleostomi</taxon>
        <taxon>Mammalia</taxon>
        <taxon>Eutheria</taxon>
        <taxon>Euarchontoglires</taxon>
        <taxon>Primates</taxon>
        <taxon>Haplorrhini</taxon>
        <taxon>Catarrhini</taxon>
        <taxon>Hominidae</taxon>
        <taxon>Homo</taxon>
    </lineage>
</organism>
<sequence length="198" mass="22531">MATLWGGLLRLGSLLSLSCLALSVLLLAQLSDAAKNFEDVRCKCICPPYKENSGHIYNKNISQKDCDCLHVVEPMPVRGPDVEAYCLRCECKYEERSSVTIKVTIIIYLSILGLLLLYMVYLTLVEPILKRRLFGHAQLIQSDDDIGDHQPFANAHDVLARSRSRANVLNKVEYAQQRWKLQVQEQRKSVFDRHVVLS</sequence>
<name>TMM9B_HUMAN</name>
<evidence type="ECO:0000250" key="1">
    <source>
        <dbReference type="UniProtKB" id="Q9JJR8"/>
    </source>
</evidence>
<evidence type="ECO:0000255" key="2"/>
<evidence type="ECO:0000255" key="3">
    <source>
        <dbReference type="PROSITE-ProRule" id="PRU00498"/>
    </source>
</evidence>
<evidence type="ECO:0000269" key="4">
    <source>
    </source>
</evidence>
<evidence type="ECO:0000269" key="5">
    <source>
    </source>
</evidence>
<evidence type="ECO:0000303" key="6">
    <source>
    </source>
</evidence>
<evidence type="ECO:0000303" key="7">
    <source>
    </source>
</evidence>
<evidence type="ECO:0000305" key="8"/>
<evidence type="ECO:0007744" key="9">
    <source>
    </source>
</evidence>
<reference key="1">
    <citation type="journal article" date="2001" name="Cytogenet. Cell Genet.">
        <title>Comparative genomic sequencing reveals a strikingly similar architecture of a conserved syntenic region on human chromosome 11p15.3 (including gene ST5) and mouse chromosome 7.</title>
        <authorList>
            <person name="Amid C."/>
            <person name="Bahr A."/>
            <person name="Mujica A."/>
            <person name="Sampson N."/>
            <person name="Bikar S.E."/>
            <person name="Winterpacht A."/>
            <person name="Zabel B."/>
            <person name="Hankeln T."/>
            <person name="Schmidt E.R."/>
        </authorList>
    </citation>
    <scope>NUCLEOTIDE SEQUENCE [GENOMIC DNA]</scope>
</reference>
<reference key="2">
    <citation type="journal article" date="2003" name="Genome Res.">
        <title>The secreted protein discovery initiative (SPDI), a large-scale effort to identify novel human secreted and transmembrane proteins: a bioinformatics assessment.</title>
        <authorList>
            <person name="Clark H.F."/>
            <person name="Gurney A.L."/>
            <person name="Abaya E."/>
            <person name="Baker K."/>
            <person name="Baldwin D.T."/>
            <person name="Brush J."/>
            <person name="Chen J."/>
            <person name="Chow B."/>
            <person name="Chui C."/>
            <person name="Crowley C."/>
            <person name="Currell B."/>
            <person name="Deuel B."/>
            <person name="Dowd P."/>
            <person name="Eaton D."/>
            <person name="Foster J.S."/>
            <person name="Grimaldi C."/>
            <person name="Gu Q."/>
            <person name="Hass P.E."/>
            <person name="Heldens S."/>
            <person name="Huang A."/>
            <person name="Kim H.S."/>
            <person name="Klimowski L."/>
            <person name="Jin Y."/>
            <person name="Johnson S."/>
            <person name="Lee J."/>
            <person name="Lewis L."/>
            <person name="Liao D."/>
            <person name="Mark M.R."/>
            <person name="Robbie E."/>
            <person name="Sanchez C."/>
            <person name="Schoenfeld J."/>
            <person name="Seshagiri S."/>
            <person name="Simmons L."/>
            <person name="Singh J."/>
            <person name="Smith V."/>
            <person name="Stinson J."/>
            <person name="Vagts A."/>
            <person name="Vandlen R.L."/>
            <person name="Watanabe C."/>
            <person name="Wieand D."/>
            <person name="Woods K."/>
            <person name="Xie M.-H."/>
            <person name="Yansura D.G."/>
            <person name="Yi S."/>
            <person name="Yu G."/>
            <person name="Yuan J."/>
            <person name="Zhang M."/>
            <person name="Zhang Z."/>
            <person name="Goddard A.D."/>
            <person name="Wood W.I."/>
            <person name="Godowski P.J."/>
            <person name="Gray A.M."/>
        </authorList>
    </citation>
    <scope>NUCLEOTIDE SEQUENCE [LARGE SCALE MRNA] (ISOFORM 1)</scope>
</reference>
<reference key="3">
    <citation type="journal article" date="2004" name="Nat. Genet.">
        <title>Complete sequencing and characterization of 21,243 full-length human cDNAs.</title>
        <authorList>
            <person name="Ota T."/>
            <person name="Suzuki Y."/>
            <person name="Nishikawa T."/>
            <person name="Otsuki T."/>
            <person name="Sugiyama T."/>
            <person name="Irie R."/>
            <person name="Wakamatsu A."/>
            <person name="Hayashi K."/>
            <person name="Sato H."/>
            <person name="Nagai K."/>
            <person name="Kimura K."/>
            <person name="Makita H."/>
            <person name="Sekine M."/>
            <person name="Obayashi M."/>
            <person name="Nishi T."/>
            <person name="Shibahara T."/>
            <person name="Tanaka T."/>
            <person name="Ishii S."/>
            <person name="Yamamoto J."/>
            <person name="Saito K."/>
            <person name="Kawai Y."/>
            <person name="Isono Y."/>
            <person name="Nakamura Y."/>
            <person name="Nagahari K."/>
            <person name="Murakami K."/>
            <person name="Yasuda T."/>
            <person name="Iwayanagi T."/>
            <person name="Wagatsuma M."/>
            <person name="Shiratori A."/>
            <person name="Sudo H."/>
            <person name="Hosoiri T."/>
            <person name="Kaku Y."/>
            <person name="Kodaira H."/>
            <person name="Kondo H."/>
            <person name="Sugawara M."/>
            <person name="Takahashi M."/>
            <person name="Kanda K."/>
            <person name="Yokoi T."/>
            <person name="Furuya T."/>
            <person name="Kikkawa E."/>
            <person name="Omura Y."/>
            <person name="Abe K."/>
            <person name="Kamihara K."/>
            <person name="Katsuta N."/>
            <person name="Sato K."/>
            <person name="Tanikawa M."/>
            <person name="Yamazaki M."/>
            <person name="Ninomiya K."/>
            <person name="Ishibashi T."/>
            <person name="Yamashita H."/>
            <person name="Murakawa K."/>
            <person name="Fujimori K."/>
            <person name="Tanai H."/>
            <person name="Kimata M."/>
            <person name="Watanabe M."/>
            <person name="Hiraoka S."/>
            <person name="Chiba Y."/>
            <person name="Ishida S."/>
            <person name="Ono Y."/>
            <person name="Takiguchi S."/>
            <person name="Watanabe S."/>
            <person name="Yosida M."/>
            <person name="Hotuta T."/>
            <person name="Kusano J."/>
            <person name="Kanehori K."/>
            <person name="Takahashi-Fujii A."/>
            <person name="Hara H."/>
            <person name="Tanase T.-O."/>
            <person name="Nomura Y."/>
            <person name="Togiya S."/>
            <person name="Komai F."/>
            <person name="Hara R."/>
            <person name="Takeuchi K."/>
            <person name="Arita M."/>
            <person name="Imose N."/>
            <person name="Musashino K."/>
            <person name="Yuuki H."/>
            <person name="Oshima A."/>
            <person name="Sasaki N."/>
            <person name="Aotsuka S."/>
            <person name="Yoshikawa Y."/>
            <person name="Matsunawa H."/>
            <person name="Ichihara T."/>
            <person name="Shiohata N."/>
            <person name="Sano S."/>
            <person name="Moriya S."/>
            <person name="Momiyama H."/>
            <person name="Satoh N."/>
            <person name="Takami S."/>
            <person name="Terashima Y."/>
            <person name="Suzuki O."/>
            <person name="Nakagawa S."/>
            <person name="Senoh A."/>
            <person name="Mizoguchi H."/>
            <person name="Goto Y."/>
            <person name="Shimizu F."/>
            <person name="Wakebe H."/>
            <person name="Hishigaki H."/>
            <person name="Watanabe T."/>
            <person name="Sugiyama A."/>
            <person name="Takemoto M."/>
            <person name="Kawakami B."/>
            <person name="Yamazaki M."/>
            <person name="Watanabe K."/>
            <person name="Kumagai A."/>
            <person name="Itakura S."/>
            <person name="Fukuzumi Y."/>
            <person name="Fujimori Y."/>
            <person name="Komiyama M."/>
            <person name="Tashiro H."/>
            <person name="Tanigami A."/>
            <person name="Fujiwara T."/>
            <person name="Ono T."/>
            <person name="Yamada K."/>
            <person name="Fujii Y."/>
            <person name="Ozaki K."/>
            <person name="Hirao M."/>
            <person name="Ohmori Y."/>
            <person name="Kawabata A."/>
            <person name="Hikiji T."/>
            <person name="Kobatake N."/>
            <person name="Inagaki H."/>
            <person name="Ikema Y."/>
            <person name="Okamoto S."/>
            <person name="Okitani R."/>
            <person name="Kawakami T."/>
            <person name="Noguchi S."/>
            <person name="Itoh T."/>
            <person name="Shigeta K."/>
            <person name="Senba T."/>
            <person name="Matsumura K."/>
            <person name="Nakajima Y."/>
            <person name="Mizuno T."/>
            <person name="Morinaga M."/>
            <person name="Sasaki M."/>
            <person name="Togashi T."/>
            <person name="Oyama M."/>
            <person name="Hata H."/>
            <person name="Watanabe M."/>
            <person name="Komatsu T."/>
            <person name="Mizushima-Sugano J."/>
            <person name="Satoh T."/>
            <person name="Shirai Y."/>
            <person name="Takahashi Y."/>
            <person name="Nakagawa K."/>
            <person name="Okumura K."/>
            <person name="Nagase T."/>
            <person name="Nomura N."/>
            <person name="Kikuchi H."/>
            <person name="Masuho Y."/>
            <person name="Yamashita R."/>
            <person name="Nakai K."/>
            <person name="Yada T."/>
            <person name="Nakamura Y."/>
            <person name="Ohara O."/>
            <person name="Isogai T."/>
            <person name="Sugano S."/>
        </authorList>
    </citation>
    <scope>NUCLEOTIDE SEQUENCE [LARGE SCALE MRNA] (ISOFORM 2)</scope>
</reference>
<reference key="4">
    <citation type="journal article" date="2006" name="Nature">
        <title>Human chromosome 11 DNA sequence and analysis including novel gene identification.</title>
        <authorList>
            <person name="Taylor T.D."/>
            <person name="Noguchi H."/>
            <person name="Totoki Y."/>
            <person name="Toyoda A."/>
            <person name="Kuroki Y."/>
            <person name="Dewar K."/>
            <person name="Lloyd C."/>
            <person name="Itoh T."/>
            <person name="Takeda T."/>
            <person name="Kim D.-W."/>
            <person name="She X."/>
            <person name="Barlow K.F."/>
            <person name="Bloom T."/>
            <person name="Bruford E."/>
            <person name="Chang J.L."/>
            <person name="Cuomo C.A."/>
            <person name="Eichler E."/>
            <person name="FitzGerald M.G."/>
            <person name="Jaffe D.B."/>
            <person name="LaButti K."/>
            <person name="Nicol R."/>
            <person name="Park H.-S."/>
            <person name="Seaman C."/>
            <person name="Sougnez C."/>
            <person name="Yang X."/>
            <person name="Zimmer A.R."/>
            <person name="Zody M.C."/>
            <person name="Birren B.W."/>
            <person name="Nusbaum C."/>
            <person name="Fujiyama A."/>
            <person name="Hattori M."/>
            <person name="Rogers J."/>
            <person name="Lander E.S."/>
            <person name="Sakaki Y."/>
        </authorList>
    </citation>
    <scope>NUCLEOTIDE SEQUENCE [LARGE SCALE GENOMIC DNA]</scope>
</reference>
<reference key="5">
    <citation type="submission" date="2005-09" db="EMBL/GenBank/DDBJ databases">
        <authorList>
            <person name="Mural R.J."/>
            <person name="Istrail S."/>
            <person name="Sutton G."/>
            <person name="Florea L."/>
            <person name="Halpern A.L."/>
            <person name="Mobarry C.M."/>
            <person name="Lippert R."/>
            <person name="Walenz B."/>
            <person name="Shatkay H."/>
            <person name="Dew I."/>
            <person name="Miller J.R."/>
            <person name="Flanigan M.J."/>
            <person name="Edwards N.J."/>
            <person name="Bolanos R."/>
            <person name="Fasulo D."/>
            <person name="Halldorsson B.V."/>
            <person name="Hannenhalli S."/>
            <person name="Turner R."/>
            <person name="Yooseph S."/>
            <person name="Lu F."/>
            <person name="Nusskern D.R."/>
            <person name="Shue B.C."/>
            <person name="Zheng X.H."/>
            <person name="Zhong F."/>
            <person name="Delcher A.L."/>
            <person name="Huson D.H."/>
            <person name="Kravitz S.A."/>
            <person name="Mouchard L."/>
            <person name="Reinert K."/>
            <person name="Remington K.A."/>
            <person name="Clark A.G."/>
            <person name="Waterman M.S."/>
            <person name="Eichler E.E."/>
            <person name="Adams M.D."/>
            <person name="Hunkapiller M.W."/>
            <person name="Myers E.W."/>
            <person name="Venter J.C."/>
        </authorList>
    </citation>
    <scope>NUCLEOTIDE SEQUENCE [LARGE SCALE GENOMIC DNA]</scope>
</reference>
<reference key="6">
    <citation type="journal article" date="2004" name="Genome Res.">
        <title>The status, quality, and expansion of the NIH full-length cDNA project: the Mammalian Gene Collection (MGC).</title>
        <authorList>
            <consortium name="The MGC Project Team"/>
        </authorList>
    </citation>
    <scope>NUCLEOTIDE SEQUENCE [LARGE SCALE MRNA] (ISOFORMS 1 AND 2)</scope>
    <source>
        <tissue>Pancreas</tissue>
        <tissue>Uterus</tissue>
    </source>
</reference>
<reference key="7">
    <citation type="journal article" date="2004" name="Protein Sci.">
        <title>Signal peptide prediction based on analysis of experimentally verified cleavage sites.</title>
        <authorList>
            <person name="Zhang Z."/>
            <person name="Henzel W.J."/>
        </authorList>
    </citation>
    <scope>PROTEIN SEQUENCE OF 34-48</scope>
</reference>
<reference key="8">
    <citation type="journal article" date="2008" name="J. Biol. Chem.">
        <title>The lysosomal transmembrane protein 9B regulates the activity of inflammatory signaling pathways.</title>
        <authorList>
            <person name="Dodeller F."/>
            <person name="Gottar M."/>
            <person name="Huesken D."/>
            <person name="Iourgenko V."/>
            <person name="Cenni B."/>
        </authorList>
    </citation>
    <scope>FUNCTION</scope>
    <scope>SUBCELLULAR LOCATION</scope>
    <scope>GLYCOSYLATION</scope>
</reference>
<reference key="9">
    <citation type="journal article" date="2013" name="J. Proteome Res.">
        <title>Toward a comprehensive characterization of a human cancer cell phosphoproteome.</title>
        <authorList>
            <person name="Zhou H."/>
            <person name="Di Palma S."/>
            <person name="Preisinger C."/>
            <person name="Peng M."/>
            <person name="Polat A.N."/>
            <person name="Heck A.J."/>
            <person name="Mohammed S."/>
        </authorList>
    </citation>
    <scope>PHOSPHORYLATION [LARGE SCALE ANALYSIS] AT SER-189</scope>
    <scope>IDENTIFICATION BY MASS SPECTROMETRY [LARGE SCALE ANALYSIS]</scope>
    <source>
        <tissue>Erythroleukemia</tissue>
    </source>
</reference>
<protein>
    <recommendedName>
        <fullName>Transmembrane protein 9B</fullName>
    </recommendedName>
</protein>
<dbReference type="EMBL" id="AJ400877">
    <property type="protein sequence ID" value="CAB92287.1"/>
    <property type="molecule type" value="Genomic_DNA"/>
</dbReference>
<dbReference type="EMBL" id="AY359069">
    <property type="protein sequence ID" value="AAQ89428.1"/>
    <property type="molecule type" value="mRNA"/>
</dbReference>
<dbReference type="EMBL" id="AK316216">
    <property type="protein sequence ID" value="BAH14587.1"/>
    <property type="molecule type" value="mRNA"/>
</dbReference>
<dbReference type="EMBL" id="AC026894">
    <property type="status" value="NOT_ANNOTATED_CDS"/>
    <property type="molecule type" value="Genomic_DNA"/>
</dbReference>
<dbReference type="EMBL" id="CH471064">
    <property type="protein sequence ID" value="EAW68608.1"/>
    <property type="molecule type" value="Genomic_DNA"/>
</dbReference>
<dbReference type="EMBL" id="CH471064">
    <property type="protein sequence ID" value="EAW68609.1"/>
    <property type="molecule type" value="Genomic_DNA"/>
</dbReference>
<dbReference type="EMBL" id="BC015884">
    <property type="protein sequence ID" value="AAH15884.1"/>
    <property type="molecule type" value="mRNA"/>
</dbReference>
<dbReference type="EMBL" id="BC040124">
    <property type="protein sequence ID" value="AAH40124.1"/>
    <property type="molecule type" value="mRNA"/>
</dbReference>
<dbReference type="CCDS" id="CCDS66021.1">
    <molecule id="Q9NQ34-2"/>
</dbReference>
<dbReference type="CCDS" id="CCDS7796.1">
    <molecule id="Q9NQ34-1"/>
</dbReference>
<dbReference type="RefSeq" id="NP_001273023.1">
    <molecule id="Q9NQ34-2"/>
    <property type="nucleotide sequence ID" value="NM_001286094.2"/>
</dbReference>
<dbReference type="RefSeq" id="NP_001273024.1">
    <molecule id="Q9NQ34-2"/>
    <property type="nucleotide sequence ID" value="NM_001286095.2"/>
</dbReference>
<dbReference type="RefSeq" id="NP_065695.1">
    <molecule id="Q9NQ34-1"/>
    <property type="nucleotide sequence ID" value="NM_020644.3"/>
</dbReference>
<dbReference type="BioGRID" id="121182">
    <property type="interactions" value="132"/>
</dbReference>
<dbReference type="FunCoup" id="Q9NQ34">
    <property type="interactions" value="1659"/>
</dbReference>
<dbReference type="IntAct" id="Q9NQ34">
    <property type="interactions" value="106"/>
</dbReference>
<dbReference type="STRING" id="9606.ENSP00000433361"/>
<dbReference type="TCDB" id="8.A.123.1.7">
    <property type="family name" value="the cytokine expression and secretion mediator and v-type atpase regulator, tmem9 (tmem9) family"/>
</dbReference>
<dbReference type="GlyCosmos" id="Q9NQ34">
    <property type="glycosylation" value="1 site, No reported glycans"/>
</dbReference>
<dbReference type="GlyGen" id="Q9NQ34">
    <property type="glycosylation" value="3 sites"/>
</dbReference>
<dbReference type="iPTMnet" id="Q9NQ34"/>
<dbReference type="PhosphoSitePlus" id="Q9NQ34"/>
<dbReference type="BioMuta" id="TMEM9B"/>
<dbReference type="DMDM" id="20532029"/>
<dbReference type="jPOST" id="Q9NQ34"/>
<dbReference type="MassIVE" id="Q9NQ34"/>
<dbReference type="PaxDb" id="9606-ENSP00000433361"/>
<dbReference type="PeptideAtlas" id="Q9NQ34"/>
<dbReference type="ProteomicsDB" id="69374"/>
<dbReference type="ProteomicsDB" id="82069">
    <molecule id="Q9NQ34-1"/>
</dbReference>
<dbReference type="Pumba" id="Q9NQ34"/>
<dbReference type="Antibodypedia" id="48632">
    <property type="antibodies" value="16 antibodies from 11 providers"/>
</dbReference>
<dbReference type="DNASU" id="56674"/>
<dbReference type="Ensembl" id="ENST00000309134.9">
    <molecule id="Q9NQ34-2"/>
    <property type="protein sequence ID" value="ENSP00000311842.5"/>
    <property type="gene ID" value="ENSG00000175348.11"/>
</dbReference>
<dbReference type="Ensembl" id="ENST00000525069.5">
    <molecule id="Q9NQ34-2"/>
    <property type="protein sequence ID" value="ENSP00000431487.1"/>
    <property type="gene ID" value="ENSG00000175348.11"/>
</dbReference>
<dbReference type="Ensembl" id="ENST00000534025.6">
    <molecule id="Q9NQ34-1"/>
    <property type="protein sequence ID" value="ENSP00000433361.1"/>
    <property type="gene ID" value="ENSG00000175348.11"/>
</dbReference>
<dbReference type="GeneID" id="56674"/>
<dbReference type="KEGG" id="hsa:56674"/>
<dbReference type="MANE-Select" id="ENST00000534025.6">
    <property type="protein sequence ID" value="ENSP00000433361.1"/>
    <property type="RefSeq nucleotide sequence ID" value="NM_020644.3"/>
    <property type="RefSeq protein sequence ID" value="NP_065695.1"/>
</dbReference>
<dbReference type="UCSC" id="uc001mhe.3">
    <molecule id="Q9NQ34-1"/>
    <property type="organism name" value="human"/>
</dbReference>
<dbReference type="AGR" id="HGNC:1168"/>
<dbReference type="CTD" id="56674"/>
<dbReference type="DisGeNET" id="56674"/>
<dbReference type="GeneCards" id="TMEM9B"/>
<dbReference type="HGNC" id="HGNC:1168">
    <property type="gene designation" value="TMEM9B"/>
</dbReference>
<dbReference type="HPA" id="ENSG00000175348">
    <property type="expression patterns" value="Low tissue specificity"/>
</dbReference>
<dbReference type="MIM" id="620293">
    <property type="type" value="gene"/>
</dbReference>
<dbReference type="neXtProt" id="NX_Q9NQ34"/>
<dbReference type="OpenTargets" id="ENSG00000175348"/>
<dbReference type="PharmGKB" id="PA25482"/>
<dbReference type="VEuPathDB" id="HostDB:ENSG00000175348"/>
<dbReference type="eggNOG" id="KOG4007">
    <property type="taxonomic scope" value="Eukaryota"/>
</dbReference>
<dbReference type="GeneTree" id="ENSGT00390000000819"/>
<dbReference type="HOGENOM" id="CLU_1964436_0_0_1"/>
<dbReference type="InParanoid" id="Q9NQ34"/>
<dbReference type="OMA" id="QDIEAYC"/>
<dbReference type="OrthoDB" id="10059035at2759"/>
<dbReference type="PAN-GO" id="Q9NQ34">
    <property type="GO annotations" value="0 GO annotations based on evolutionary models"/>
</dbReference>
<dbReference type="PhylomeDB" id="Q9NQ34"/>
<dbReference type="TreeFam" id="TF315146"/>
<dbReference type="PathwayCommons" id="Q9NQ34"/>
<dbReference type="SignaLink" id="Q9NQ34"/>
<dbReference type="BioGRID-ORCS" id="56674">
    <property type="hits" value="14 hits in 1160 CRISPR screens"/>
</dbReference>
<dbReference type="ChiTaRS" id="TMEM9B">
    <property type="organism name" value="human"/>
</dbReference>
<dbReference type="GenomeRNAi" id="56674"/>
<dbReference type="Pharos" id="Q9NQ34">
    <property type="development level" value="Tdark"/>
</dbReference>
<dbReference type="PRO" id="PR:Q9NQ34"/>
<dbReference type="Proteomes" id="UP000005640">
    <property type="component" value="Chromosome 11"/>
</dbReference>
<dbReference type="RNAct" id="Q9NQ34">
    <property type="molecule type" value="protein"/>
</dbReference>
<dbReference type="Bgee" id="ENSG00000175348">
    <property type="expression patterns" value="Expressed in esophagus squamous epithelium and 201 other cell types or tissues"/>
</dbReference>
<dbReference type="ExpressionAtlas" id="Q9NQ34">
    <property type="expression patterns" value="baseline and differential"/>
</dbReference>
<dbReference type="GO" id="GO:0031901">
    <property type="term" value="C:early endosome membrane"/>
    <property type="evidence" value="ECO:0000314"/>
    <property type="project" value="UniProtKB"/>
</dbReference>
<dbReference type="GO" id="GO:0005765">
    <property type="term" value="C:lysosomal membrane"/>
    <property type="evidence" value="ECO:0000314"/>
    <property type="project" value="UniProtKB"/>
</dbReference>
<dbReference type="GO" id="GO:0043123">
    <property type="term" value="P:positive regulation of canonical NF-kappaB signal transduction"/>
    <property type="evidence" value="ECO:0007001"/>
    <property type="project" value="UniProtKB"/>
</dbReference>
<dbReference type="InterPro" id="IPR008853">
    <property type="entry name" value="TMEM9/TMEM9B"/>
</dbReference>
<dbReference type="PANTHER" id="PTHR13064">
    <property type="entry name" value="TRANSMEMBRANE PROTEIN 9 FAMILY MEMBER"/>
    <property type="match status" value="1"/>
</dbReference>
<dbReference type="PANTHER" id="PTHR13064:SF2">
    <property type="entry name" value="TRANSMEMBRANE PROTEIN 9B"/>
    <property type="match status" value="1"/>
</dbReference>
<dbReference type="Pfam" id="PF05434">
    <property type="entry name" value="Tmemb_9"/>
    <property type="match status" value="1"/>
</dbReference>
<keyword id="KW-0025">Alternative splicing</keyword>
<keyword id="KW-0903">Direct protein sequencing</keyword>
<keyword id="KW-0967">Endosome</keyword>
<keyword id="KW-0325">Glycoprotein</keyword>
<keyword id="KW-0458">Lysosome</keyword>
<keyword id="KW-0472">Membrane</keyword>
<keyword id="KW-0597">Phosphoprotein</keyword>
<keyword id="KW-1267">Proteomics identification</keyword>
<keyword id="KW-1185">Reference proteome</keyword>
<keyword id="KW-0732">Signal</keyword>
<keyword id="KW-0812">Transmembrane</keyword>
<keyword id="KW-1133">Transmembrane helix</keyword>
<proteinExistence type="evidence at protein level"/>